<keyword id="KW-0227">DNA damage</keyword>
<keyword id="KW-0233">DNA recombination</keyword>
<keyword id="KW-0234">DNA repair</keyword>
<keyword id="KW-0539">Nucleus</keyword>
<keyword id="KW-0597">Phosphoprotein</keyword>
<keyword id="KW-1185">Reference proteome</keyword>
<organism>
    <name type="scientific">Coccidioides immitis (strain RS)</name>
    <name type="common">Valley fever fungus</name>
    <dbReference type="NCBI Taxonomy" id="246410"/>
    <lineage>
        <taxon>Eukaryota</taxon>
        <taxon>Fungi</taxon>
        <taxon>Dikarya</taxon>
        <taxon>Ascomycota</taxon>
        <taxon>Pezizomycotina</taxon>
        <taxon>Eurotiomycetes</taxon>
        <taxon>Eurotiomycetidae</taxon>
        <taxon>Onygenales</taxon>
        <taxon>Onygenaceae</taxon>
        <taxon>Coccidioides</taxon>
    </lineage>
</organism>
<name>SLX4_COCIM</name>
<accession>Q1DYR6</accession>
<accession>J3KE61</accession>
<comment type="function">
    <text evidence="1">Regulatory subunit of the SLX1-SLX4 structure-specific endonuclease that resolves DNA secondary structures generated during DNA repair and recombination. Has endonuclease activity towards branched DNA substrates, introducing single-strand cuts in duplex DNA close to junctions with ss-DNA.</text>
</comment>
<comment type="subunit">
    <text evidence="1">Forms a heterodimer with SLX1.</text>
</comment>
<comment type="subcellular location">
    <subcellularLocation>
        <location evidence="1">Nucleus</location>
    </subcellularLocation>
</comment>
<comment type="PTM">
    <text evidence="1">Phosphorylated in response to DNA damage.</text>
</comment>
<comment type="similarity">
    <text evidence="1">Belongs to the SLX4 family.</text>
</comment>
<reference key="1">
    <citation type="journal article" date="2009" name="Genome Res.">
        <title>Comparative genomic analyses of the human fungal pathogens Coccidioides and their relatives.</title>
        <authorList>
            <person name="Sharpton T.J."/>
            <person name="Stajich J.E."/>
            <person name="Rounsley S.D."/>
            <person name="Gardner M.J."/>
            <person name="Wortman J.R."/>
            <person name="Jordar V.S."/>
            <person name="Maiti R."/>
            <person name="Kodira C.D."/>
            <person name="Neafsey D.E."/>
            <person name="Zeng Q."/>
            <person name="Hung C.-Y."/>
            <person name="McMahan C."/>
            <person name="Muszewska A."/>
            <person name="Grynberg M."/>
            <person name="Mandel M.A."/>
            <person name="Kellner E.M."/>
            <person name="Barker B.M."/>
            <person name="Galgiani J.N."/>
            <person name="Orbach M.J."/>
            <person name="Kirkland T.N."/>
            <person name="Cole G.T."/>
            <person name="Henn M.R."/>
            <person name="Birren B.W."/>
            <person name="Taylor J.W."/>
        </authorList>
    </citation>
    <scope>NUCLEOTIDE SEQUENCE [LARGE SCALE GENOMIC DNA]</scope>
    <source>
        <strain>RS</strain>
    </source>
</reference>
<reference key="2">
    <citation type="journal article" date="2010" name="Genome Res.">
        <title>Population genomic sequencing of Coccidioides fungi reveals recent hybridization and transposon control.</title>
        <authorList>
            <person name="Neafsey D.E."/>
            <person name="Barker B.M."/>
            <person name="Sharpton T.J."/>
            <person name="Stajich J.E."/>
            <person name="Park D.J."/>
            <person name="Whiston E."/>
            <person name="Hung C.-Y."/>
            <person name="McMahan C."/>
            <person name="White J."/>
            <person name="Sykes S."/>
            <person name="Heiman D."/>
            <person name="Young S."/>
            <person name="Zeng Q."/>
            <person name="Abouelleil A."/>
            <person name="Aftuck L."/>
            <person name="Bessette D."/>
            <person name="Brown A."/>
            <person name="FitzGerald M."/>
            <person name="Lui A."/>
            <person name="Macdonald J.P."/>
            <person name="Priest M."/>
            <person name="Orbach M.J."/>
            <person name="Galgiani J.N."/>
            <person name="Kirkland T.N."/>
            <person name="Cole G.T."/>
            <person name="Birren B.W."/>
            <person name="Henn M.R."/>
            <person name="Taylor J.W."/>
            <person name="Rounsley S.D."/>
        </authorList>
    </citation>
    <scope>GENOME REANNOTATION</scope>
    <source>
        <strain>RS</strain>
    </source>
</reference>
<gene>
    <name evidence="1" type="primary">SLX4</name>
    <name type="ORF">CIMG_04547</name>
</gene>
<dbReference type="EMBL" id="GG704914">
    <property type="protein sequence ID" value="EAS33523.3"/>
    <property type="molecule type" value="Genomic_DNA"/>
</dbReference>
<dbReference type="RefSeq" id="XP_001245106.2">
    <property type="nucleotide sequence ID" value="XM_001245105.2"/>
</dbReference>
<dbReference type="SMR" id="Q1DYR6"/>
<dbReference type="STRING" id="246410.Q1DYR6"/>
<dbReference type="GeneID" id="4564981"/>
<dbReference type="KEGG" id="cim:CIMG_04547"/>
<dbReference type="VEuPathDB" id="FungiDB:CIMG_04547"/>
<dbReference type="InParanoid" id="Q1DYR6"/>
<dbReference type="OMA" id="SICCLWK"/>
<dbReference type="OrthoDB" id="5349119at2759"/>
<dbReference type="Proteomes" id="UP000001261">
    <property type="component" value="Unassembled WGS sequence"/>
</dbReference>
<dbReference type="GO" id="GO:0033557">
    <property type="term" value="C:Slx1-Slx4 complex"/>
    <property type="evidence" value="ECO:0007669"/>
    <property type="project" value="UniProtKB-UniRule"/>
</dbReference>
<dbReference type="GO" id="GO:0017108">
    <property type="term" value="F:5'-flap endonuclease activity"/>
    <property type="evidence" value="ECO:0007669"/>
    <property type="project" value="InterPro"/>
</dbReference>
<dbReference type="GO" id="GO:0006310">
    <property type="term" value="P:DNA recombination"/>
    <property type="evidence" value="ECO:0007669"/>
    <property type="project" value="UniProtKB-UniRule"/>
</dbReference>
<dbReference type="GO" id="GO:0006281">
    <property type="term" value="P:DNA repair"/>
    <property type="evidence" value="ECO:0007669"/>
    <property type="project" value="UniProtKB-UniRule"/>
</dbReference>
<dbReference type="GO" id="GO:0006260">
    <property type="term" value="P:DNA replication"/>
    <property type="evidence" value="ECO:0007669"/>
    <property type="project" value="InterPro"/>
</dbReference>
<dbReference type="CDD" id="cd22999">
    <property type="entry name" value="SAP_SLX4"/>
    <property type="match status" value="1"/>
</dbReference>
<dbReference type="HAMAP" id="MF_03110">
    <property type="entry name" value="Endonuc_su_Slx4"/>
    <property type="match status" value="1"/>
</dbReference>
<dbReference type="InterPro" id="IPR027784">
    <property type="entry name" value="Slx4_ascomycetes"/>
</dbReference>
<dbReference type="InterPro" id="IPR018574">
    <property type="entry name" value="Structure-sp_endonuc_su_Slx4"/>
</dbReference>
<dbReference type="Pfam" id="PF09494">
    <property type="entry name" value="Slx4"/>
    <property type="match status" value="1"/>
</dbReference>
<protein>
    <recommendedName>
        <fullName evidence="1">Structure-specific endonuclease subunit SLX4</fullName>
    </recommendedName>
</protein>
<feature type="chain" id="PRO_0000388026" description="Structure-specific endonuclease subunit SLX4">
    <location>
        <begin position="1"/>
        <end position="822"/>
    </location>
</feature>
<feature type="region of interest" description="Disordered" evidence="2">
    <location>
        <begin position="1"/>
        <end position="39"/>
    </location>
</feature>
<feature type="region of interest" description="Disordered" evidence="2">
    <location>
        <begin position="73"/>
        <end position="117"/>
    </location>
</feature>
<feature type="region of interest" description="Disordered" evidence="2">
    <location>
        <begin position="277"/>
        <end position="362"/>
    </location>
</feature>
<feature type="region of interest" description="Disordered" evidence="2">
    <location>
        <begin position="390"/>
        <end position="418"/>
    </location>
</feature>
<feature type="region of interest" description="Disordered" evidence="2">
    <location>
        <begin position="456"/>
        <end position="507"/>
    </location>
</feature>
<feature type="region of interest" description="Disordered" evidence="2">
    <location>
        <begin position="589"/>
        <end position="676"/>
    </location>
</feature>
<feature type="compositionally biased region" description="Polar residues" evidence="2">
    <location>
        <begin position="13"/>
        <end position="39"/>
    </location>
</feature>
<feature type="compositionally biased region" description="Low complexity" evidence="2">
    <location>
        <begin position="280"/>
        <end position="294"/>
    </location>
</feature>
<feature type="compositionally biased region" description="Polar residues" evidence="2">
    <location>
        <begin position="310"/>
        <end position="320"/>
    </location>
</feature>
<feature type="compositionally biased region" description="Basic residues" evidence="2">
    <location>
        <begin position="342"/>
        <end position="354"/>
    </location>
</feature>
<feature type="compositionally biased region" description="Low complexity" evidence="2">
    <location>
        <begin position="460"/>
        <end position="470"/>
    </location>
</feature>
<feature type="compositionally biased region" description="Polar residues" evidence="2">
    <location>
        <begin position="471"/>
        <end position="484"/>
    </location>
</feature>
<feature type="compositionally biased region" description="Low complexity" evidence="2">
    <location>
        <begin position="490"/>
        <end position="506"/>
    </location>
</feature>
<feature type="compositionally biased region" description="Polar residues" evidence="2">
    <location>
        <begin position="589"/>
        <end position="612"/>
    </location>
</feature>
<feature type="compositionally biased region" description="Basic residues" evidence="2">
    <location>
        <begin position="627"/>
        <end position="636"/>
    </location>
</feature>
<feature type="compositionally biased region" description="Low complexity" evidence="2">
    <location>
        <begin position="637"/>
        <end position="650"/>
    </location>
</feature>
<evidence type="ECO:0000255" key="1">
    <source>
        <dbReference type="HAMAP-Rule" id="MF_03110"/>
    </source>
</evidence>
<evidence type="ECO:0000256" key="2">
    <source>
        <dbReference type="SAM" id="MobiDB-lite"/>
    </source>
</evidence>
<sequence>MSHLDLTRHRTRSPSPSQIFGSSTTPVATNSTHSEPSASSILRSILGEYADPKRPDVSGADPIRCPVKRVHKTPAVRASSPGRENVPVRTLQSSKDAEGDNFSGDGQLTPCGGPRPLAERLSPKLLAKQTRRKGVGAQKRTKGCDLVDRILTGRSIKASATAASKSSDLPQPQRKGIPTLVKEANPGEADWEDEGLQLEPATKRKYSWTPVKDTNLSIIDLTANSGSSPPSIPGREAQKFTSLVSRYGFAETSPLAMKNEFPEDFPTRKRQLDLLQGTTNSSSSEGSSNKSSGKCPLKVNGTKGRRSRKVTTITSLSTAQYGLKDSPVESFPSVDTTERPSGKRSKSQTKKGGNKKPAGVSDFKVAPTTDALKSLEDQVYLFGTSSQLERVSSDEDKLGVPSAPASSRQSARDRTSVSTLSKYKVSRNLWAAGWRDLDGSVADIEIVDMVNIDTPKSHESSTLTLPSTSTNASNQGFSSQNTINDRSKPSQTTSTTTESTGVESGQLVVPSLCEDLSEKAGYPAVPERETLSSREIASSESAYIETMPSFRGFTTAELAQKVAAFGFKPIKSREKMISLLEKCWQSQHKNSAPTSLPANNANPPDSHASGQKNVVRCDTGGSNASHTTKRASKAPQKKQSTSSTSHSAKAGPKQVDCSQERPNHAYLPHDSTQASSQPVIVIPDSEESGDDFQDTYLGSLNRTSSTNYHPLSANSIPDGSPLFLRTISQASTEEKTSDPSDINQQITRAIKAQPRMTAINGMKRPTWLEKILMYDPIWLEDLTVWLNTEGLDRVGEDREVSRLTVREWCESKGICCTWKKPT</sequence>
<proteinExistence type="inferred from homology"/>